<proteinExistence type="inferred from homology"/>
<gene>
    <name evidence="1" type="primary">hemA</name>
    <name type="ordered locus">CFF8240_0688</name>
</gene>
<protein>
    <recommendedName>
        <fullName evidence="1">Glutamyl-tRNA reductase</fullName>
        <shortName evidence="1">GluTR</shortName>
        <ecNumber evidence="1">1.2.1.70</ecNumber>
    </recommendedName>
</protein>
<feature type="chain" id="PRO_1000057571" description="Glutamyl-tRNA reductase">
    <location>
        <begin position="1"/>
        <end position="422"/>
    </location>
</feature>
<feature type="active site" description="Nucleophile" evidence="1">
    <location>
        <position position="51"/>
    </location>
</feature>
<feature type="binding site" evidence="1">
    <location>
        <begin position="50"/>
        <end position="53"/>
    </location>
    <ligand>
        <name>substrate</name>
    </ligand>
</feature>
<feature type="binding site" evidence="1">
    <location>
        <position position="110"/>
    </location>
    <ligand>
        <name>substrate</name>
    </ligand>
</feature>
<feature type="binding site" evidence="1">
    <location>
        <begin position="115"/>
        <end position="117"/>
    </location>
    <ligand>
        <name>substrate</name>
    </ligand>
</feature>
<feature type="binding site" evidence="1">
    <location>
        <position position="121"/>
    </location>
    <ligand>
        <name>substrate</name>
    </ligand>
</feature>
<feature type="binding site" evidence="1">
    <location>
        <begin position="190"/>
        <end position="195"/>
    </location>
    <ligand>
        <name>NADP(+)</name>
        <dbReference type="ChEBI" id="CHEBI:58349"/>
    </ligand>
</feature>
<feature type="site" description="Important for activity" evidence="1">
    <location>
        <position position="100"/>
    </location>
</feature>
<dbReference type="EC" id="1.2.1.70" evidence="1"/>
<dbReference type="EMBL" id="CP000487">
    <property type="protein sequence ID" value="ABK82043.1"/>
    <property type="molecule type" value="Genomic_DNA"/>
</dbReference>
<dbReference type="RefSeq" id="WP_002849091.1">
    <property type="nucleotide sequence ID" value="NC_008599.1"/>
</dbReference>
<dbReference type="SMR" id="A0RNT0"/>
<dbReference type="GeneID" id="61064529"/>
<dbReference type="KEGG" id="cff:CFF8240_0688"/>
<dbReference type="eggNOG" id="COG0373">
    <property type="taxonomic scope" value="Bacteria"/>
</dbReference>
<dbReference type="HOGENOM" id="CLU_035113_2_2_7"/>
<dbReference type="UniPathway" id="UPA00251">
    <property type="reaction ID" value="UER00316"/>
</dbReference>
<dbReference type="Proteomes" id="UP000000760">
    <property type="component" value="Chromosome"/>
</dbReference>
<dbReference type="GO" id="GO:0008883">
    <property type="term" value="F:glutamyl-tRNA reductase activity"/>
    <property type="evidence" value="ECO:0007669"/>
    <property type="project" value="UniProtKB-UniRule"/>
</dbReference>
<dbReference type="GO" id="GO:0050661">
    <property type="term" value="F:NADP binding"/>
    <property type="evidence" value="ECO:0007669"/>
    <property type="project" value="InterPro"/>
</dbReference>
<dbReference type="GO" id="GO:0019353">
    <property type="term" value="P:protoporphyrinogen IX biosynthetic process from glutamate"/>
    <property type="evidence" value="ECO:0007669"/>
    <property type="project" value="TreeGrafter"/>
</dbReference>
<dbReference type="CDD" id="cd05213">
    <property type="entry name" value="NAD_bind_Glutamyl_tRNA_reduct"/>
    <property type="match status" value="1"/>
</dbReference>
<dbReference type="Gene3D" id="3.30.460.30">
    <property type="entry name" value="Glutamyl-tRNA reductase, N-terminal domain"/>
    <property type="match status" value="1"/>
</dbReference>
<dbReference type="Gene3D" id="3.40.50.720">
    <property type="entry name" value="NAD(P)-binding Rossmann-like Domain"/>
    <property type="match status" value="1"/>
</dbReference>
<dbReference type="HAMAP" id="MF_00087">
    <property type="entry name" value="Glu_tRNA_reductase"/>
    <property type="match status" value="1"/>
</dbReference>
<dbReference type="InterPro" id="IPR000343">
    <property type="entry name" value="4pyrrol_synth_GluRdtase"/>
</dbReference>
<dbReference type="InterPro" id="IPR015896">
    <property type="entry name" value="4pyrrol_synth_GluRdtase_dimer"/>
</dbReference>
<dbReference type="InterPro" id="IPR015895">
    <property type="entry name" value="4pyrrol_synth_GluRdtase_N"/>
</dbReference>
<dbReference type="InterPro" id="IPR018214">
    <property type="entry name" value="GluRdtase_CS"/>
</dbReference>
<dbReference type="InterPro" id="IPR036453">
    <property type="entry name" value="GluRdtase_dimer_dom_sf"/>
</dbReference>
<dbReference type="InterPro" id="IPR036343">
    <property type="entry name" value="GluRdtase_N_sf"/>
</dbReference>
<dbReference type="InterPro" id="IPR036291">
    <property type="entry name" value="NAD(P)-bd_dom_sf"/>
</dbReference>
<dbReference type="InterPro" id="IPR006151">
    <property type="entry name" value="Shikm_DH/Glu-tRNA_Rdtase"/>
</dbReference>
<dbReference type="NCBIfam" id="TIGR01035">
    <property type="entry name" value="hemA"/>
    <property type="match status" value="1"/>
</dbReference>
<dbReference type="PANTHER" id="PTHR43013">
    <property type="entry name" value="GLUTAMYL-TRNA REDUCTASE"/>
    <property type="match status" value="1"/>
</dbReference>
<dbReference type="PANTHER" id="PTHR43013:SF1">
    <property type="entry name" value="GLUTAMYL-TRNA REDUCTASE"/>
    <property type="match status" value="1"/>
</dbReference>
<dbReference type="Pfam" id="PF00745">
    <property type="entry name" value="GlutR_dimer"/>
    <property type="match status" value="1"/>
</dbReference>
<dbReference type="Pfam" id="PF05201">
    <property type="entry name" value="GlutR_N"/>
    <property type="match status" value="1"/>
</dbReference>
<dbReference type="Pfam" id="PF01488">
    <property type="entry name" value="Shikimate_DH"/>
    <property type="match status" value="1"/>
</dbReference>
<dbReference type="PIRSF" id="PIRSF000445">
    <property type="entry name" value="4pyrrol_synth_GluRdtase"/>
    <property type="match status" value="1"/>
</dbReference>
<dbReference type="SUPFAM" id="SSF69742">
    <property type="entry name" value="Glutamyl tRNA-reductase catalytic, N-terminal domain"/>
    <property type="match status" value="1"/>
</dbReference>
<dbReference type="SUPFAM" id="SSF69075">
    <property type="entry name" value="Glutamyl tRNA-reductase dimerization domain"/>
    <property type="match status" value="1"/>
</dbReference>
<dbReference type="SUPFAM" id="SSF51735">
    <property type="entry name" value="NAD(P)-binding Rossmann-fold domains"/>
    <property type="match status" value="1"/>
</dbReference>
<dbReference type="PROSITE" id="PS00747">
    <property type="entry name" value="GLUTR"/>
    <property type="match status" value="1"/>
</dbReference>
<keyword id="KW-0521">NADP</keyword>
<keyword id="KW-0560">Oxidoreductase</keyword>
<keyword id="KW-0627">Porphyrin biosynthesis</keyword>
<evidence type="ECO:0000255" key="1">
    <source>
        <dbReference type="HAMAP-Rule" id="MF_00087"/>
    </source>
</evidence>
<sequence length="422" mass="47142">MHYVSISFTHKNTDIGVREKLSFSDNNRRREILRLIGANDSIAESMALSTCNRVEIFAYVLDTQSSIRHILNSISILTLVPFEALELRADIYEDQGAIHHLFAVASSLDSLVVGETQIAGQLKEAFKFAYDNEDCGVNISSAMHFAFKCAAEVRALTTISKNPVSVSSVAVAKAKEIYGNIGGMSAVVIGAGEMSRLAAQHLINAEVNVIIINRDEIKAQTLAKELGELASYASFDKLSEYINRYRLIFSATGAPNAIITNEIIEQKDFHRYFFDIAVPRDIDIEEDEYIHVYAVDDLEEIVRTNLALREEQASIAYSIVGKSTTSFFKWRLSEGSTPAIKALRLKAKDIACKEIEKAVKKGYLKCSDQDEASKLVHQVFKAFLHTPSVRLKEKNSDDILKALEYLFDIKIQKDENLEGNLK</sequence>
<organism>
    <name type="scientific">Campylobacter fetus subsp. fetus (strain 82-40)</name>
    <dbReference type="NCBI Taxonomy" id="360106"/>
    <lineage>
        <taxon>Bacteria</taxon>
        <taxon>Pseudomonadati</taxon>
        <taxon>Campylobacterota</taxon>
        <taxon>Epsilonproteobacteria</taxon>
        <taxon>Campylobacterales</taxon>
        <taxon>Campylobacteraceae</taxon>
        <taxon>Campylobacter</taxon>
    </lineage>
</organism>
<comment type="function">
    <text evidence="1">Catalyzes the NADPH-dependent reduction of glutamyl-tRNA(Glu) to glutamate 1-semialdehyde (GSA).</text>
</comment>
<comment type="catalytic activity">
    <reaction evidence="1">
        <text>(S)-4-amino-5-oxopentanoate + tRNA(Glu) + NADP(+) = L-glutamyl-tRNA(Glu) + NADPH + H(+)</text>
        <dbReference type="Rhea" id="RHEA:12344"/>
        <dbReference type="Rhea" id="RHEA-COMP:9663"/>
        <dbReference type="Rhea" id="RHEA-COMP:9680"/>
        <dbReference type="ChEBI" id="CHEBI:15378"/>
        <dbReference type="ChEBI" id="CHEBI:57501"/>
        <dbReference type="ChEBI" id="CHEBI:57783"/>
        <dbReference type="ChEBI" id="CHEBI:58349"/>
        <dbReference type="ChEBI" id="CHEBI:78442"/>
        <dbReference type="ChEBI" id="CHEBI:78520"/>
        <dbReference type="EC" id="1.2.1.70"/>
    </reaction>
</comment>
<comment type="pathway">
    <text evidence="1">Porphyrin-containing compound metabolism; protoporphyrin-IX biosynthesis; 5-aminolevulinate from L-glutamyl-tRNA(Glu): step 1/2.</text>
</comment>
<comment type="subunit">
    <text evidence="1">Homodimer.</text>
</comment>
<comment type="domain">
    <text evidence="1">Possesses an unusual extended V-shaped dimeric structure with each monomer consisting of three distinct domains arranged along a curved 'spinal' alpha-helix. The N-terminal catalytic domain specifically recognizes the glutamate moiety of the substrate. The second domain is the NADPH-binding domain, and the third C-terminal domain is responsible for dimerization.</text>
</comment>
<comment type="miscellaneous">
    <text evidence="1">During catalysis, the active site Cys acts as a nucleophile attacking the alpha-carbonyl group of tRNA-bound glutamate with the formation of a thioester intermediate between enzyme and glutamate, and the concomitant release of tRNA(Glu). The thioester intermediate is finally reduced by direct hydride transfer from NADPH, to form the product GSA.</text>
</comment>
<comment type="similarity">
    <text evidence="1">Belongs to the glutamyl-tRNA reductase family.</text>
</comment>
<accession>A0RNT0</accession>
<name>HEM1_CAMFF</name>
<reference key="1">
    <citation type="submission" date="2006-11" db="EMBL/GenBank/DDBJ databases">
        <title>Sequence of Campylobacter fetus subsp. fetus 82-40.</title>
        <authorList>
            <person name="Fouts D.E."/>
            <person name="Nelson K.E."/>
        </authorList>
    </citation>
    <scope>NUCLEOTIDE SEQUENCE [LARGE SCALE GENOMIC DNA]</scope>
    <source>
        <strain>82-40</strain>
    </source>
</reference>